<organism>
    <name type="scientific">Oryza sativa subsp. indica</name>
    <name type="common">Rice</name>
    <dbReference type="NCBI Taxonomy" id="39946"/>
    <lineage>
        <taxon>Eukaryota</taxon>
        <taxon>Viridiplantae</taxon>
        <taxon>Streptophyta</taxon>
        <taxon>Embryophyta</taxon>
        <taxon>Tracheophyta</taxon>
        <taxon>Spermatophyta</taxon>
        <taxon>Magnoliopsida</taxon>
        <taxon>Liliopsida</taxon>
        <taxon>Poales</taxon>
        <taxon>Poaceae</taxon>
        <taxon>BOP clade</taxon>
        <taxon>Oryzoideae</taxon>
        <taxon>Oryzeae</taxon>
        <taxon>Oryzinae</taxon>
        <taxon>Oryza</taxon>
        <taxon>Oryza sativa</taxon>
    </lineage>
</organism>
<name>ETR3_ORYSI</name>
<evidence type="ECO:0000250" key="1">
    <source>
        <dbReference type="UniProtKB" id="P49333"/>
    </source>
</evidence>
<evidence type="ECO:0000250" key="2">
    <source>
        <dbReference type="UniProtKB" id="Q0DWC7"/>
    </source>
</evidence>
<evidence type="ECO:0000255" key="3"/>
<evidence type="ECO:0000255" key="4">
    <source>
        <dbReference type="PROSITE-ProRule" id="PRU00107"/>
    </source>
</evidence>
<evidence type="ECO:0000255" key="5">
    <source>
        <dbReference type="PROSITE-ProRule" id="PRU00169"/>
    </source>
</evidence>
<evidence type="ECO:0000303" key="6">
    <source>
    </source>
</evidence>
<evidence type="ECO:0000305" key="7"/>
<evidence type="ECO:0000312" key="8">
    <source>
        <dbReference type="EMBL" id="AAR08915.1"/>
    </source>
</evidence>
<evidence type="ECO:0000312" key="9">
    <source>
        <dbReference type="EMBL" id="EEC74265.1"/>
    </source>
</evidence>
<keyword id="KW-0067">ATP-binding</keyword>
<keyword id="KW-0175">Coiled coil</keyword>
<keyword id="KW-0186">Copper</keyword>
<keyword id="KW-0256">Endoplasmic reticulum</keyword>
<keyword id="KW-0936">Ethylene signaling pathway</keyword>
<keyword id="KW-0418">Kinase</keyword>
<keyword id="KW-0472">Membrane</keyword>
<keyword id="KW-0479">Metal-binding</keyword>
<keyword id="KW-0547">Nucleotide-binding</keyword>
<keyword id="KW-0675">Receptor</keyword>
<keyword id="KW-1185">Reference proteome</keyword>
<keyword id="KW-0808">Transferase</keyword>
<keyword id="KW-0812">Transmembrane</keyword>
<keyword id="KW-1133">Transmembrane helix</keyword>
<keyword id="KW-0902">Two-component regulatory system</keyword>
<feature type="chain" id="PRO_0000433868" description="Ethylene receptor 3">
    <location>
        <begin position="1"/>
        <end position="836"/>
    </location>
</feature>
<feature type="transmembrane region" description="Helical" evidence="3">
    <location>
        <begin position="137"/>
        <end position="157"/>
    </location>
</feature>
<feature type="transmembrane region" description="Helical" evidence="3">
    <location>
        <begin position="166"/>
        <end position="186"/>
    </location>
</feature>
<feature type="transmembrane region" description="Helical" evidence="3">
    <location>
        <begin position="204"/>
        <end position="224"/>
    </location>
</feature>
<feature type="domain" description="GAF" evidence="7">
    <location>
        <begin position="269"/>
        <end position="413"/>
    </location>
</feature>
<feature type="domain" description="Histidine kinase" evidence="4">
    <location>
        <begin position="457"/>
        <end position="691"/>
    </location>
</feature>
<feature type="domain" description="Response regulatory" evidence="5">
    <location>
        <begin position="718"/>
        <end position="834"/>
    </location>
</feature>
<feature type="coiled-coil region" evidence="3">
    <location>
        <begin position="416"/>
        <end position="452"/>
    </location>
</feature>
<feature type="binding site" evidence="1">
    <location>
        <position position="176"/>
    </location>
    <ligand>
        <name>Cu cation</name>
        <dbReference type="ChEBI" id="CHEBI:23378"/>
    </ligand>
</feature>
<feature type="binding site" evidence="1">
    <location>
        <position position="180"/>
    </location>
    <ligand>
        <name>Cu cation</name>
        <dbReference type="ChEBI" id="CHEBI:23378"/>
    </ligand>
</feature>
<feature type="sequence conflict" description="In Ref. 1; AAR08915." ref="1">
    <original>AARE</original>
    <variation>PARQ</variation>
    <location>
        <begin position="99"/>
        <end position="102"/>
    </location>
</feature>
<feature type="sequence conflict" description="In Ref. 2; EEC74265." ref="2">
    <original>D</original>
    <variation>DG</variation>
    <location>
        <position position="111"/>
    </location>
</feature>
<feature type="sequence conflict" description="In Ref. 1; AAR08915." ref="1">
    <original>R</original>
    <variation>W</variation>
    <location>
        <position position="130"/>
    </location>
</feature>
<feature type="sequence conflict" description="In Ref. 1; AAR08915." ref="1">
    <original>L</original>
    <variation>R</variation>
    <location>
        <position position="283"/>
    </location>
</feature>
<feature type="sequence conflict" description="In Ref. 1; AAR08915." ref="1">
    <original>R</original>
    <variation>W</variation>
    <location>
        <position position="609"/>
    </location>
</feature>
<feature type="sequence conflict" description="In Ref. 1; AAR08915." ref="1">
    <original>N</original>
    <variation>L</variation>
    <location>
        <position position="671"/>
    </location>
</feature>
<sequence>MLLSTWTPGCFQGNKILLRSLITWYYLEFMPKLRPFYFLFYLTLPSCATDSPPISDKSSSIFLPLAQQQQLVHWMMPPRFRCQDYLLPLLLALSPAAAAAREVEYHHCHCDGGGGGGGGGLWSMDSIFRRQKVSDLLIAAAYFSIPLEILYFVAGLRHLLPFRWVLVQFGAFIVLCGLTHLLTAFTYEPHPFMVVLLLTTAKFLTALVSFLTAITLLTLIPQLLRVKVRESLLWLKARELDREVVLMKRQEEASWHVRMLTHEIRKSLDRHTVLYTTLIELSLVLGLTNCAVWMPAAGEMCLTHELRRDGGGEDGVVGVDDADVVEVRGSDGVKLLGPDSVLAAASGGKEEGTGAVAAIRMPMLKVSDFKGGTPEVIQTSYAVLVLVPPAGKSWGRHEMEIVEVVAGQVAVALSHATLLEESRAMRDRLAEQNRELLQARRDALMANEARQAFQGVMSQGMRRPIHSILGLVSMVQEEALAPEQRLVVDTMARTATVVSTLVNDVMEMSADSRERFPLETRPFHLHAMIRDAACVARCLCDFRGFGFAVHVENALPDLVVGDERRIFHVLLHMVGNLIGRTEPGHVTLRVRAADDDVLDDRLGQRWDPRWPSYSTGYSSVKFVIGVKRQQNGDAGSPLSRRPSGKGIDLRLSFSMCRKLVQMMQGNIWAINDPQGLPESMTLVLRFQLQSPLTSSSLGGSFEQKHSSPSCQIAGLKVLLIDDDDDINLVVARKLLEKLGCVVSSPPSGSGFLSSVGSSAAAFQLVMVNLEMKRVKALDVATRISQYRSGRWPIVMAMASDQKAWEKCAQSGINGILKKPVILQELKDELARILQST</sequence>
<dbReference type="EC" id="2.7.13.3" evidence="7"/>
<dbReference type="EMBL" id="AY434735">
    <property type="protein sequence ID" value="AAR08915.1"/>
    <property type="molecule type" value="mRNA"/>
</dbReference>
<dbReference type="EMBL" id="CM000127">
    <property type="protein sequence ID" value="EEC74265.1"/>
    <property type="status" value="ALT_SEQ"/>
    <property type="molecule type" value="Genomic_DNA"/>
</dbReference>
<dbReference type="SMR" id="Q6T5K2"/>
<dbReference type="STRING" id="39946.Q6T5K2"/>
<dbReference type="Proteomes" id="UP000007015">
    <property type="component" value="Chromosome 2"/>
</dbReference>
<dbReference type="GO" id="GO:0005789">
    <property type="term" value="C:endoplasmic reticulum membrane"/>
    <property type="evidence" value="ECO:0007669"/>
    <property type="project" value="UniProtKB-SubCell"/>
</dbReference>
<dbReference type="GO" id="GO:0005524">
    <property type="term" value="F:ATP binding"/>
    <property type="evidence" value="ECO:0007669"/>
    <property type="project" value="UniProtKB-KW"/>
</dbReference>
<dbReference type="GO" id="GO:0051740">
    <property type="term" value="F:ethylene binding"/>
    <property type="evidence" value="ECO:0007669"/>
    <property type="project" value="UniProtKB-ARBA"/>
</dbReference>
<dbReference type="GO" id="GO:0038199">
    <property type="term" value="F:ethylene receptor activity"/>
    <property type="evidence" value="ECO:0007669"/>
    <property type="project" value="TreeGrafter"/>
</dbReference>
<dbReference type="GO" id="GO:0046872">
    <property type="term" value="F:metal ion binding"/>
    <property type="evidence" value="ECO:0007669"/>
    <property type="project" value="UniProtKB-KW"/>
</dbReference>
<dbReference type="GO" id="GO:0000155">
    <property type="term" value="F:phosphorelay sensor kinase activity"/>
    <property type="evidence" value="ECO:0007669"/>
    <property type="project" value="InterPro"/>
</dbReference>
<dbReference type="GO" id="GO:0010105">
    <property type="term" value="P:negative regulation of ethylene-activated signaling pathway"/>
    <property type="evidence" value="ECO:0007669"/>
    <property type="project" value="UniProtKB-ARBA"/>
</dbReference>
<dbReference type="CDD" id="cd16938">
    <property type="entry name" value="HATPase_ETR2_ERS2-EIN4-like"/>
    <property type="match status" value="1"/>
</dbReference>
<dbReference type="CDD" id="cd00082">
    <property type="entry name" value="HisKA"/>
    <property type="match status" value="1"/>
</dbReference>
<dbReference type="FunFam" id="1.10.287.130:FF:000004">
    <property type="entry name" value="Ethylene receptor 1"/>
    <property type="match status" value="1"/>
</dbReference>
<dbReference type="Gene3D" id="1.10.287.130">
    <property type="match status" value="1"/>
</dbReference>
<dbReference type="Gene3D" id="3.30.450.40">
    <property type="match status" value="1"/>
</dbReference>
<dbReference type="Gene3D" id="3.40.50.2300">
    <property type="match status" value="1"/>
</dbReference>
<dbReference type="Gene3D" id="3.30.565.10">
    <property type="entry name" value="Histidine kinase-like ATPase, C-terminal domain"/>
    <property type="match status" value="1"/>
</dbReference>
<dbReference type="InterPro" id="IPR011006">
    <property type="entry name" value="CheY-like_superfamily"/>
</dbReference>
<dbReference type="InterPro" id="IPR003018">
    <property type="entry name" value="GAF"/>
</dbReference>
<dbReference type="InterPro" id="IPR029016">
    <property type="entry name" value="GAF-like_dom_sf"/>
</dbReference>
<dbReference type="InterPro" id="IPR036890">
    <property type="entry name" value="HATPase_C_sf"/>
</dbReference>
<dbReference type="InterPro" id="IPR005467">
    <property type="entry name" value="His_kinase_dom"/>
</dbReference>
<dbReference type="InterPro" id="IPR003661">
    <property type="entry name" value="HisK_dim/P_dom"/>
</dbReference>
<dbReference type="InterPro" id="IPR036097">
    <property type="entry name" value="HisK_dim/P_sf"/>
</dbReference>
<dbReference type="InterPro" id="IPR001789">
    <property type="entry name" value="Sig_transdc_resp-reg_receiver"/>
</dbReference>
<dbReference type="PANTHER" id="PTHR24423:SF624">
    <property type="entry name" value="ETHYLENE RECEPTOR 3"/>
    <property type="match status" value="1"/>
</dbReference>
<dbReference type="PANTHER" id="PTHR24423">
    <property type="entry name" value="TWO-COMPONENT SENSOR HISTIDINE KINASE"/>
    <property type="match status" value="1"/>
</dbReference>
<dbReference type="Pfam" id="PF25487">
    <property type="entry name" value="ETR1_N"/>
    <property type="match status" value="1"/>
</dbReference>
<dbReference type="Pfam" id="PF01590">
    <property type="entry name" value="GAF"/>
    <property type="match status" value="1"/>
</dbReference>
<dbReference type="Pfam" id="PF00512">
    <property type="entry name" value="HisKA"/>
    <property type="match status" value="1"/>
</dbReference>
<dbReference type="Pfam" id="PF00072">
    <property type="entry name" value="Response_reg"/>
    <property type="match status" value="1"/>
</dbReference>
<dbReference type="SMART" id="SM00065">
    <property type="entry name" value="GAF"/>
    <property type="match status" value="1"/>
</dbReference>
<dbReference type="SMART" id="SM00388">
    <property type="entry name" value="HisKA"/>
    <property type="match status" value="1"/>
</dbReference>
<dbReference type="SMART" id="SM00448">
    <property type="entry name" value="REC"/>
    <property type="match status" value="1"/>
</dbReference>
<dbReference type="SUPFAM" id="SSF55874">
    <property type="entry name" value="ATPase domain of HSP90 chaperone/DNA topoisomerase II/histidine kinase"/>
    <property type="match status" value="1"/>
</dbReference>
<dbReference type="SUPFAM" id="SSF52172">
    <property type="entry name" value="CheY-like"/>
    <property type="match status" value="1"/>
</dbReference>
<dbReference type="SUPFAM" id="SSF47384">
    <property type="entry name" value="Homodimeric domain of signal transducing histidine kinase"/>
    <property type="match status" value="1"/>
</dbReference>
<dbReference type="PROSITE" id="PS50109">
    <property type="entry name" value="HIS_KIN"/>
    <property type="match status" value="1"/>
</dbReference>
<dbReference type="PROSITE" id="PS50110">
    <property type="entry name" value="RESPONSE_REGULATORY"/>
    <property type="match status" value="1"/>
</dbReference>
<accession>Q6T5K2</accession>
<accession>B8AF44</accession>
<proteinExistence type="evidence at transcript level"/>
<gene>
    <name evidence="8" type="primary">ETR3</name>
    <name evidence="9" type="ORF">OsI_09484</name>
</gene>
<protein>
    <recommendedName>
        <fullName evidence="7">Ethylene receptor 3</fullName>
        <shortName evidence="6">OS-ETR3</shortName>
        <ecNumber evidence="7">2.7.13.3</ecNumber>
    </recommendedName>
</protein>
<comment type="function">
    <text evidence="2">Ethylene receptor related to bacterial two-component regulators. Acts as a negative regulator of ethylene signaling. May delay the transition from the vegetative stage to the floral stage by up-regulating GI (GIGANTEA) and RCN1 and cause starch accumulation in stems by down-regulating the alpha-amylase AMY3D.</text>
</comment>
<comment type="catalytic activity">
    <reaction evidence="7">
        <text>ATP + protein L-histidine = ADP + protein N-phospho-L-histidine.</text>
        <dbReference type="EC" id="2.7.13.3"/>
    </reaction>
</comment>
<comment type="cofactor">
    <cofactor evidence="1">
        <name>Cu cation</name>
        <dbReference type="ChEBI" id="CHEBI:23378"/>
    </cofactor>
    <text evidence="1">Binds 1 copper ion per dimer.</text>
</comment>
<comment type="subcellular location">
    <subcellularLocation>
        <location evidence="1">Endoplasmic reticulum membrane</location>
        <topology evidence="3">Multi-pass membrane protein</topology>
    </subcellularLocation>
</comment>
<comment type="similarity">
    <text evidence="7">Belongs to the ethylene receptor family.</text>
</comment>
<comment type="sequence caution" evidence="7">
    <conflict type="erroneous gene model prediction">
        <sequence resource="EMBL-CDS" id="EEC74265"/>
    </conflict>
</comment>
<reference key="1">
    <citation type="journal article" date="2004" name="J. Exp. Bot.">
        <title>Differential expression of three genes encoding an ethylene receptor in rice during development, and in response to indole-3-acetic acid and silver ions.</title>
        <authorList>
            <person name="Yau C.P."/>
            <person name="Wang L."/>
            <person name="Yu M."/>
            <person name="Zee S.Y."/>
            <person name="Yip W.K."/>
        </authorList>
    </citation>
    <scope>NUCLEOTIDE SEQUENCE [MRNA]</scope>
    <source>
        <strain>cv. IR36</strain>
    </source>
</reference>
<reference key="2">
    <citation type="journal article" date="2005" name="PLoS Biol.">
        <title>The genomes of Oryza sativa: a history of duplications.</title>
        <authorList>
            <person name="Yu J."/>
            <person name="Wang J."/>
            <person name="Lin W."/>
            <person name="Li S."/>
            <person name="Li H."/>
            <person name="Zhou J."/>
            <person name="Ni P."/>
            <person name="Dong W."/>
            <person name="Hu S."/>
            <person name="Zeng C."/>
            <person name="Zhang J."/>
            <person name="Zhang Y."/>
            <person name="Li R."/>
            <person name="Xu Z."/>
            <person name="Li S."/>
            <person name="Li X."/>
            <person name="Zheng H."/>
            <person name="Cong L."/>
            <person name="Lin L."/>
            <person name="Yin J."/>
            <person name="Geng J."/>
            <person name="Li G."/>
            <person name="Shi J."/>
            <person name="Liu J."/>
            <person name="Lv H."/>
            <person name="Li J."/>
            <person name="Wang J."/>
            <person name="Deng Y."/>
            <person name="Ran L."/>
            <person name="Shi X."/>
            <person name="Wang X."/>
            <person name="Wu Q."/>
            <person name="Li C."/>
            <person name="Ren X."/>
            <person name="Wang J."/>
            <person name="Wang X."/>
            <person name="Li D."/>
            <person name="Liu D."/>
            <person name="Zhang X."/>
            <person name="Ji Z."/>
            <person name="Zhao W."/>
            <person name="Sun Y."/>
            <person name="Zhang Z."/>
            <person name="Bao J."/>
            <person name="Han Y."/>
            <person name="Dong L."/>
            <person name="Ji J."/>
            <person name="Chen P."/>
            <person name="Wu S."/>
            <person name="Liu J."/>
            <person name="Xiao Y."/>
            <person name="Bu D."/>
            <person name="Tan J."/>
            <person name="Yang L."/>
            <person name="Ye C."/>
            <person name="Zhang J."/>
            <person name="Xu J."/>
            <person name="Zhou Y."/>
            <person name="Yu Y."/>
            <person name="Zhang B."/>
            <person name="Zhuang S."/>
            <person name="Wei H."/>
            <person name="Liu B."/>
            <person name="Lei M."/>
            <person name="Yu H."/>
            <person name="Li Y."/>
            <person name="Xu H."/>
            <person name="Wei S."/>
            <person name="He X."/>
            <person name="Fang L."/>
            <person name="Zhang Z."/>
            <person name="Zhang Y."/>
            <person name="Huang X."/>
            <person name="Su Z."/>
            <person name="Tong W."/>
            <person name="Li J."/>
            <person name="Tong Z."/>
            <person name="Li S."/>
            <person name="Ye J."/>
            <person name="Wang L."/>
            <person name="Fang L."/>
            <person name="Lei T."/>
            <person name="Chen C.-S."/>
            <person name="Chen H.-C."/>
            <person name="Xu Z."/>
            <person name="Li H."/>
            <person name="Huang H."/>
            <person name="Zhang F."/>
            <person name="Xu H."/>
            <person name="Li N."/>
            <person name="Zhao C."/>
            <person name="Li S."/>
            <person name="Dong L."/>
            <person name="Huang Y."/>
            <person name="Li L."/>
            <person name="Xi Y."/>
            <person name="Qi Q."/>
            <person name="Li W."/>
            <person name="Zhang B."/>
            <person name="Hu W."/>
            <person name="Zhang Y."/>
            <person name="Tian X."/>
            <person name="Jiao Y."/>
            <person name="Liang X."/>
            <person name="Jin J."/>
            <person name="Gao L."/>
            <person name="Zheng W."/>
            <person name="Hao B."/>
            <person name="Liu S.-M."/>
            <person name="Wang W."/>
            <person name="Yuan L."/>
            <person name="Cao M."/>
            <person name="McDermott J."/>
            <person name="Samudrala R."/>
            <person name="Wang J."/>
            <person name="Wong G.K.-S."/>
            <person name="Yang H."/>
        </authorList>
    </citation>
    <scope>NUCLEOTIDE SEQUENCE [LARGE SCALE GENOMIC DNA]</scope>
    <source>
        <strain>cv. 93-11</strain>
    </source>
</reference>